<proteinExistence type="evidence at transcript level"/>
<dbReference type="EMBL" id="X57663">
    <property type="protein sequence ID" value="CAA40863.1"/>
    <property type="molecule type" value="mRNA"/>
</dbReference>
<dbReference type="PIR" id="S12311">
    <property type="entry name" value="S12311"/>
</dbReference>
<dbReference type="SMR" id="Q99069"/>
<dbReference type="eggNOG" id="KOG0118">
    <property type="taxonomic scope" value="Eukaryota"/>
</dbReference>
<dbReference type="ExpressionAtlas" id="Q99069">
    <property type="expression patterns" value="baseline and differential"/>
</dbReference>
<dbReference type="GO" id="GO:0003723">
    <property type="term" value="F:RNA binding"/>
    <property type="evidence" value="ECO:0007669"/>
    <property type="project" value="UniProtKB-KW"/>
</dbReference>
<dbReference type="Gene3D" id="3.30.70.330">
    <property type="match status" value="1"/>
</dbReference>
<dbReference type="InterPro" id="IPR012677">
    <property type="entry name" value="Nucleotide-bd_a/b_plait_sf"/>
</dbReference>
<dbReference type="InterPro" id="IPR035979">
    <property type="entry name" value="RBD_domain_sf"/>
</dbReference>
<dbReference type="InterPro" id="IPR000504">
    <property type="entry name" value="RRM_dom"/>
</dbReference>
<dbReference type="InterPro" id="IPR052462">
    <property type="entry name" value="SLIRP/GR-RBP-like"/>
</dbReference>
<dbReference type="PANTHER" id="PTHR48027">
    <property type="entry name" value="HETEROGENEOUS NUCLEAR RIBONUCLEOPROTEIN 87F-RELATED"/>
    <property type="match status" value="1"/>
</dbReference>
<dbReference type="Pfam" id="PF00076">
    <property type="entry name" value="RRM_1"/>
    <property type="match status" value="1"/>
</dbReference>
<dbReference type="SMART" id="SM00360">
    <property type="entry name" value="RRM"/>
    <property type="match status" value="1"/>
</dbReference>
<dbReference type="SUPFAM" id="SSF54928">
    <property type="entry name" value="RNA-binding domain, RBD"/>
    <property type="match status" value="1"/>
</dbReference>
<dbReference type="PROSITE" id="PS50102">
    <property type="entry name" value="RRM"/>
    <property type="match status" value="1"/>
</dbReference>
<sequence length="142" mass="13725">NSLHSAFSTYGEVLESKIILDRETQRSRGFGFVTFSTEEAMRSAIEGMNGKELDGRNITVNEAQSRGGRGGGGGGGYGGGRGGGGGYGRRDGGGGGYGGGGGGYGGGRGGYGGGGYGGGGGGYGGGSRGGGGYGNSDGNWRN</sequence>
<organism>
    <name type="scientific">Sorghum bicolor</name>
    <name type="common">Sorghum</name>
    <name type="synonym">Sorghum vulgare</name>
    <dbReference type="NCBI Taxonomy" id="4558"/>
    <lineage>
        <taxon>Eukaryota</taxon>
        <taxon>Viridiplantae</taxon>
        <taxon>Streptophyta</taxon>
        <taxon>Embryophyta</taxon>
        <taxon>Tracheophyta</taxon>
        <taxon>Spermatophyta</taxon>
        <taxon>Magnoliopsida</taxon>
        <taxon>Liliopsida</taxon>
        <taxon>Poales</taxon>
        <taxon>Poaceae</taxon>
        <taxon>PACMAD clade</taxon>
        <taxon>Panicoideae</taxon>
        <taxon>Andropogonodae</taxon>
        <taxon>Andropogoneae</taxon>
        <taxon>Sorghinae</taxon>
        <taxon>Sorghum</taxon>
    </lineage>
</organism>
<evidence type="ECO:0000255" key="1">
    <source>
        <dbReference type="PROSITE-ProRule" id="PRU00176"/>
    </source>
</evidence>
<evidence type="ECO:0000256" key="2">
    <source>
        <dbReference type="SAM" id="MobiDB-lite"/>
    </source>
</evidence>
<name>GRP1_SORBI</name>
<feature type="chain" id="PRO_0000081605" description="Glycine-rich RNA-binding protein 1">
    <location>
        <begin position="1" status="less than"/>
        <end position="142"/>
    </location>
</feature>
<feature type="domain" description="RRM" evidence="1">
    <location>
        <begin position="1" status="less than"/>
        <end position="65"/>
    </location>
</feature>
<feature type="region of interest" description="Disordered" evidence="2">
    <location>
        <begin position="48"/>
        <end position="101"/>
    </location>
</feature>
<feature type="compositionally biased region" description="Gly residues" evidence="2">
    <location>
        <begin position="67"/>
        <end position="101"/>
    </location>
</feature>
<feature type="non-terminal residue">
    <location>
        <position position="1"/>
    </location>
</feature>
<accession>Q99069</accession>
<keyword id="KW-0694">RNA-binding</keyword>
<protein>
    <recommendedName>
        <fullName>Glycine-rich RNA-binding protein 1</fullName>
    </recommendedName>
</protein>
<comment type="function">
    <text>Possibly has a role in RNA transcription or processing during stress.</text>
</comment>
<gene>
    <name type="primary">GRP1</name>
    <name type="ordered locus">Sb03g020184</name>
</gene>
<reference key="1">
    <citation type="journal article" date="1990" name="Plant Mol. Biol.">
        <title>Glycine-rich RNA-binding proteins from Sorghum vulgare.</title>
        <authorList>
            <person name="Cretin C."/>
            <person name="Puigdomenech P."/>
        </authorList>
    </citation>
    <scope>NUCLEOTIDE SEQUENCE [MRNA]</scope>
    <source>
        <strain>cv. Tamaran FNK 140</strain>
        <tissue>Leaf</tissue>
    </source>
</reference>